<gene>
    <name evidence="5" type="primary">ENO</name>
</gene>
<name>ENO_PLAFA</name>
<dbReference type="EC" id="4.2.1.11" evidence="4"/>
<dbReference type="EMBL" id="U00152">
    <property type="protein sequence ID" value="AAA18634.1"/>
    <property type="molecule type" value="Unassigned_DNA"/>
</dbReference>
<dbReference type="PIR" id="S42206">
    <property type="entry name" value="S42206"/>
</dbReference>
<dbReference type="SMR" id="Q27727"/>
<dbReference type="MoonProt" id="Q27727"/>
<dbReference type="VEuPathDB" id="PlasmoDB:PF3D7_1015900"/>
<dbReference type="VEuPathDB" id="PlasmoDB:Pf7G8-2_000301500"/>
<dbReference type="VEuPathDB" id="PlasmoDB:Pf7G8_100020300"/>
<dbReference type="VEuPathDB" id="PlasmoDB:PfCD01_100021100"/>
<dbReference type="VEuPathDB" id="PlasmoDB:PfDd2_100021300"/>
<dbReference type="VEuPathDB" id="PlasmoDB:PfGA01_100021200"/>
<dbReference type="VEuPathDB" id="PlasmoDB:PfGB4_100020900"/>
<dbReference type="VEuPathDB" id="PlasmoDB:PfGN01_100021500"/>
<dbReference type="VEuPathDB" id="PlasmoDB:PfHB3_100020300"/>
<dbReference type="VEuPathDB" id="PlasmoDB:PfIT_100019900"/>
<dbReference type="VEuPathDB" id="PlasmoDB:PfKE01_100021200"/>
<dbReference type="VEuPathDB" id="PlasmoDB:PfKH01_100020500"/>
<dbReference type="VEuPathDB" id="PlasmoDB:PfKH02_100021400"/>
<dbReference type="VEuPathDB" id="PlasmoDB:PfML01_100020200"/>
<dbReference type="VEuPathDB" id="PlasmoDB:PfNF135_100021300"/>
<dbReference type="VEuPathDB" id="PlasmoDB:PfNF166_100020800"/>
<dbReference type="VEuPathDB" id="PlasmoDB:PfNF54_100021100"/>
<dbReference type="VEuPathDB" id="PlasmoDB:PfSD01_100020600"/>
<dbReference type="VEuPathDB" id="PlasmoDB:PfSN01_100021300"/>
<dbReference type="VEuPathDB" id="PlasmoDB:PfTG01_100021100"/>
<dbReference type="BRENDA" id="4.2.1.11">
    <property type="organism ID" value="4889"/>
</dbReference>
<dbReference type="SABIO-RK" id="Q27727"/>
<dbReference type="UniPathway" id="UPA00109">
    <property type="reaction ID" value="UER00187"/>
</dbReference>
<dbReference type="GO" id="GO:0009986">
    <property type="term" value="C:cell surface"/>
    <property type="evidence" value="ECO:0007669"/>
    <property type="project" value="UniProtKB-SubCell"/>
</dbReference>
<dbReference type="GO" id="GO:0005856">
    <property type="term" value="C:cytoskeleton"/>
    <property type="evidence" value="ECO:0007669"/>
    <property type="project" value="UniProtKB-SubCell"/>
</dbReference>
<dbReference type="GO" id="GO:0005829">
    <property type="term" value="C:cytosol"/>
    <property type="evidence" value="ECO:0000314"/>
    <property type="project" value="CAFA"/>
</dbReference>
<dbReference type="GO" id="GO:0005634">
    <property type="term" value="C:nucleus"/>
    <property type="evidence" value="ECO:0007669"/>
    <property type="project" value="UniProtKB-SubCell"/>
</dbReference>
<dbReference type="GO" id="GO:0020039">
    <property type="term" value="C:pellicle"/>
    <property type="evidence" value="ECO:0000314"/>
    <property type="project" value="CAFA"/>
</dbReference>
<dbReference type="GO" id="GO:0000015">
    <property type="term" value="C:phosphopyruvate hydratase complex"/>
    <property type="evidence" value="ECO:0000315"/>
    <property type="project" value="CAFA"/>
</dbReference>
<dbReference type="GO" id="GO:0005886">
    <property type="term" value="C:plasma membrane"/>
    <property type="evidence" value="ECO:0007669"/>
    <property type="project" value="UniProtKB-SubCell"/>
</dbReference>
<dbReference type="GO" id="GO:0005773">
    <property type="term" value="C:vacuole"/>
    <property type="evidence" value="ECO:0007669"/>
    <property type="project" value="UniProtKB-SubCell"/>
</dbReference>
<dbReference type="GO" id="GO:0000287">
    <property type="term" value="F:magnesium ion binding"/>
    <property type="evidence" value="ECO:0000315"/>
    <property type="project" value="CAFA"/>
</dbReference>
<dbReference type="GO" id="GO:0004634">
    <property type="term" value="F:phosphopyruvate hydratase activity"/>
    <property type="evidence" value="ECO:0000315"/>
    <property type="project" value="CAFA"/>
</dbReference>
<dbReference type="GO" id="GO:0042803">
    <property type="term" value="F:protein homodimerization activity"/>
    <property type="evidence" value="ECO:0000315"/>
    <property type="project" value="CAFA"/>
</dbReference>
<dbReference type="GO" id="GO:0044403">
    <property type="term" value="P:biological process involved in symbiotic interaction"/>
    <property type="evidence" value="ECO:0000314"/>
    <property type="project" value="CAFA"/>
</dbReference>
<dbReference type="GO" id="GO:0006096">
    <property type="term" value="P:glycolytic process"/>
    <property type="evidence" value="ECO:0007669"/>
    <property type="project" value="UniProtKB-UniPathway"/>
</dbReference>
<dbReference type="GO" id="GO:0044409">
    <property type="term" value="P:symbiont entry into host"/>
    <property type="evidence" value="ECO:0000314"/>
    <property type="project" value="CAFA"/>
</dbReference>
<dbReference type="CDD" id="cd03313">
    <property type="entry name" value="enolase"/>
    <property type="match status" value="1"/>
</dbReference>
<dbReference type="FunFam" id="3.30.390.10:FF:000001">
    <property type="entry name" value="Enolase"/>
    <property type="match status" value="1"/>
</dbReference>
<dbReference type="FunFam" id="3.20.20.120:FF:000002">
    <property type="entry name" value="Enolase 1"/>
    <property type="match status" value="1"/>
</dbReference>
<dbReference type="Gene3D" id="3.20.20.120">
    <property type="entry name" value="Enolase-like C-terminal domain"/>
    <property type="match status" value="1"/>
</dbReference>
<dbReference type="Gene3D" id="3.30.390.10">
    <property type="entry name" value="Enolase-like, N-terminal domain"/>
    <property type="match status" value="1"/>
</dbReference>
<dbReference type="HAMAP" id="MF_00318">
    <property type="entry name" value="Enolase"/>
    <property type="match status" value="1"/>
</dbReference>
<dbReference type="InterPro" id="IPR000941">
    <property type="entry name" value="Enolase"/>
</dbReference>
<dbReference type="InterPro" id="IPR036849">
    <property type="entry name" value="Enolase-like_C_sf"/>
</dbReference>
<dbReference type="InterPro" id="IPR029017">
    <property type="entry name" value="Enolase-like_N"/>
</dbReference>
<dbReference type="InterPro" id="IPR020810">
    <property type="entry name" value="Enolase_C"/>
</dbReference>
<dbReference type="InterPro" id="IPR020809">
    <property type="entry name" value="Enolase_CS"/>
</dbReference>
<dbReference type="InterPro" id="IPR020811">
    <property type="entry name" value="Enolase_N"/>
</dbReference>
<dbReference type="NCBIfam" id="TIGR01060">
    <property type="entry name" value="eno"/>
    <property type="match status" value="1"/>
</dbReference>
<dbReference type="PANTHER" id="PTHR11902">
    <property type="entry name" value="ENOLASE"/>
    <property type="match status" value="1"/>
</dbReference>
<dbReference type="PANTHER" id="PTHR11902:SF1">
    <property type="entry name" value="ENOLASE"/>
    <property type="match status" value="1"/>
</dbReference>
<dbReference type="Pfam" id="PF00113">
    <property type="entry name" value="Enolase_C"/>
    <property type="match status" value="1"/>
</dbReference>
<dbReference type="Pfam" id="PF03952">
    <property type="entry name" value="Enolase_N"/>
    <property type="match status" value="1"/>
</dbReference>
<dbReference type="PIRSF" id="PIRSF001400">
    <property type="entry name" value="Enolase"/>
    <property type="match status" value="1"/>
</dbReference>
<dbReference type="PRINTS" id="PR00148">
    <property type="entry name" value="ENOLASE"/>
</dbReference>
<dbReference type="SFLD" id="SFLDF00002">
    <property type="entry name" value="enolase"/>
    <property type="match status" value="1"/>
</dbReference>
<dbReference type="SFLD" id="SFLDG00178">
    <property type="entry name" value="enolase"/>
    <property type="match status" value="1"/>
</dbReference>
<dbReference type="SMART" id="SM01192">
    <property type="entry name" value="Enolase_C"/>
    <property type="match status" value="1"/>
</dbReference>
<dbReference type="SMART" id="SM01193">
    <property type="entry name" value="Enolase_N"/>
    <property type="match status" value="1"/>
</dbReference>
<dbReference type="SUPFAM" id="SSF51604">
    <property type="entry name" value="Enolase C-terminal domain-like"/>
    <property type="match status" value="1"/>
</dbReference>
<dbReference type="SUPFAM" id="SSF54826">
    <property type="entry name" value="Enolase N-terminal domain-like"/>
    <property type="match status" value="1"/>
</dbReference>
<dbReference type="PROSITE" id="PS00164">
    <property type="entry name" value="ENOLASE"/>
    <property type="match status" value="1"/>
</dbReference>
<sequence>MAHVITRINAREILDSRGNPTVEVDLETNLGIFRAAVPSGASTGIYEALELRDNDKSRYLGKGVQKAIKNINEIIAPKLIGMNCTEQKKIDNLMVEELDGSKNEWGWSKSKLGANAILAISMAVCRAGAAPNKVSLYKYLAQLAGKKSDQMVLPVPCLNVINGGSHAGNKLSFQEFMIVPVGAPSFKEALRYGAEVYHTLKSEIKKKYGIDATNVGDEGGFAPNILNANEALDLLVTAIKSAGYEGKVKIAMDVAASEFYNSENKTYDLDFKTPNNDKSLVKTGAQLVDLYIDLVKKYPIVSIEDPFDQDDWENYAKLTAAIGKDVQIVGDDLLVTNPTRITKALEKNACNALLLKVNQIGSITEAIEACLLSQKNNWGVMVSHRSGETEDVFIADLVVALRTGQIKTGAPCRSERNAKYNQLLRIEESLGNNAVFAGEKFRLQLN</sequence>
<reference key="1">
    <citation type="journal article" date="1994" name="Eur. J. Biochem.">
        <title>Molecular characterisation of the enolase gene from the human malaria parasite Plasmodium falciparum. Evidence for ancestry within a photosynthetic lineage.</title>
        <authorList>
            <person name="Read M."/>
            <person name="Hicks K.E."/>
            <person name="Sims P.F.G."/>
            <person name="Hyde J.E."/>
        </authorList>
    </citation>
    <scope>NUCLEOTIDE SEQUENCE</scope>
</reference>
<keyword id="KW-0007">Acetylation</keyword>
<keyword id="KW-1003">Cell membrane</keyword>
<keyword id="KW-0963">Cytoplasm</keyword>
<keyword id="KW-0206">Cytoskeleton</keyword>
<keyword id="KW-0324">Glycolysis</keyword>
<keyword id="KW-1017">Isopeptide bond</keyword>
<keyword id="KW-0456">Lyase</keyword>
<keyword id="KW-0460">Magnesium</keyword>
<keyword id="KW-0472">Membrane</keyword>
<keyword id="KW-0479">Metal-binding</keyword>
<keyword id="KW-0539">Nucleus</keyword>
<keyword id="KW-0597">Phosphoprotein</keyword>
<keyword id="KW-0832">Ubl conjugation</keyword>
<keyword id="KW-0926">Vacuole</keyword>
<proteinExistence type="inferred from homology"/>
<protein>
    <recommendedName>
        <fullName evidence="5">Enolase</fullName>
        <ecNumber evidence="4">4.2.1.11</ecNumber>
    </recommendedName>
    <alternativeName>
        <fullName>2-phospho-D-glycerate hydro-lyase</fullName>
    </alternativeName>
    <alternativeName>
        <fullName>2-phosphoglycerate dehydratase</fullName>
    </alternativeName>
</protein>
<organism>
    <name type="scientific">Plasmodium falciparum</name>
    <dbReference type="NCBI Taxonomy" id="5833"/>
    <lineage>
        <taxon>Eukaryota</taxon>
        <taxon>Sar</taxon>
        <taxon>Alveolata</taxon>
        <taxon>Apicomplexa</taxon>
        <taxon>Aconoidasida</taxon>
        <taxon>Haemosporida</taxon>
        <taxon>Plasmodiidae</taxon>
        <taxon>Plasmodium</taxon>
        <taxon>Plasmodium (Laverania)</taxon>
    </lineage>
</organism>
<accession>Q27727</accession>
<feature type="chain" id="PRO_0000134090" description="Enolase">
    <location>
        <begin position="1"/>
        <end position="446"/>
    </location>
</feature>
<feature type="short sequence motif" description="Pentapeptide insert" evidence="3">
    <location>
        <begin position="104"/>
        <end position="108"/>
    </location>
</feature>
<feature type="short sequence motif" description="DKSLVK motif" evidence="4">
    <location>
        <begin position="277"/>
        <end position="282"/>
    </location>
</feature>
<feature type="active site" description="Proton donor" evidence="1">
    <location>
        <position position="218"/>
    </location>
</feature>
<feature type="active site" description="Proton acceptor" evidence="1">
    <location>
        <position position="356"/>
    </location>
</feature>
<feature type="binding site" evidence="1">
    <location>
        <position position="42"/>
    </location>
    <ligand>
        <name>Mg(2+)</name>
        <dbReference type="ChEBI" id="CHEBI:18420"/>
        <label>1</label>
    </ligand>
</feature>
<feature type="binding site" evidence="1">
    <location>
        <position position="166"/>
    </location>
    <ligand>
        <name>substrate</name>
    </ligand>
</feature>
<feature type="binding site" evidence="1">
    <location>
        <position position="175"/>
    </location>
    <ligand>
        <name>substrate</name>
    </ligand>
</feature>
<feature type="binding site" evidence="1">
    <location>
        <position position="253"/>
    </location>
    <ligand>
        <name>Mg(2+)</name>
        <dbReference type="ChEBI" id="CHEBI:18420"/>
        <label>2</label>
    </ligand>
</feature>
<feature type="binding site" evidence="1">
    <location>
        <position position="304"/>
    </location>
    <ligand>
        <name>Mg(2+)</name>
        <dbReference type="ChEBI" id="CHEBI:18420"/>
        <label>2</label>
    </ligand>
</feature>
<feature type="binding site" evidence="1">
    <location>
        <position position="304"/>
    </location>
    <ligand>
        <name>substrate</name>
    </ligand>
</feature>
<feature type="binding site" evidence="1">
    <location>
        <position position="331"/>
    </location>
    <ligand>
        <name>Mg(2+)</name>
        <dbReference type="ChEBI" id="CHEBI:18420"/>
        <label>2</label>
    </ligand>
</feature>
<feature type="binding site" evidence="1">
    <location>
        <position position="331"/>
    </location>
    <ligand>
        <name>substrate</name>
    </ligand>
</feature>
<feature type="binding site" evidence="1">
    <location>
        <begin position="383"/>
        <end position="386"/>
    </location>
    <ligand>
        <name>substrate</name>
    </ligand>
</feature>
<feature type="binding site" evidence="1">
    <location>
        <position position="407"/>
    </location>
    <ligand>
        <name>substrate</name>
    </ligand>
</feature>
<feature type="modified residue" description="Phosphoserine" evidence="3">
    <location>
        <position position="42"/>
    </location>
</feature>
<feature type="modified residue" description="N6-acetyllysine" evidence="2">
    <location>
        <position position="133"/>
    </location>
</feature>
<feature type="modified residue" description="Phosphotyrosine" evidence="2">
    <location>
        <position position="139"/>
    </location>
</feature>
<feature type="modified residue" description="Phosphothreonine" evidence="2">
    <location>
        <position position="339"/>
    </location>
</feature>
<feature type="modified residue" description="N6-acetyllysine" evidence="2">
    <location>
        <position position="375"/>
    </location>
</feature>
<feature type="cross-link" description="Glycyl lysine isopeptide (Lys-Gly) (interchain with G-Cter in ubiquitin)" evidence="2">
    <location>
        <position position="138"/>
    </location>
</feature>
<evidence type="ECO:0000250" key="1">
    <source>
        <dbReference type="UniProtKB" id="P06733"/>
    </source>
</evidence>
<evidence type="ECO:0000250" key="2">
    <source>
        <dbReference type="UniProtKB" id="Q7RA60"/>
    </source>
</evidence>
<evidence type="ECO:0000250" key="3">
    <source>
        <dbReference type="UniProtKB" id="Q8IJN7"/>
    </source>
</evidence>
<evidence type="ECO:0000250" key="4">
    <source>
        <dbReference type="UniProtKB" id="W7JLR6"/>
    </source>
</evidence>
<evidence type="ECO:0000303" key="5">
    <source>
    </source>
</evidence>
<evidence type="ECO:0000305" key="6"/>
<comment type="function">
    <text evidence="4">Glycolytic enzyme that catalyzes the conversion of 2-phosphoglycerate to phosphoenolpyruvate (By similarity). In addition to glycolysis, involved in various processes such as parasite development and invasion (By similarity). Plays an essential role during ookinete invasion of the mosquito vector midgut by mediating the interaction of the ookinete with the midgut epithelium and, further, by binding to mammalian host plasminogen in the blood meal, whose conversion to active plasmin promotes the invasion process (By similarity).</text>
</comment>
<comment type="catalytic activity">
    <reaction evidence="4">
        <text>(2R)-2-phosphoglycerate = phosphoenolpyruvate + H2O</text>
        <dbReference type="Rhea" id="RHEA:10164"/>
        <dbReference type="ChEBI" id="CHEBI:15377"/>
        <dbReference type="ChEBI" id="CHEBI:58289"/>
        <dbReference type="ChEBI" id="CHEBI:58702"/>
        <dbReference type="EC" id="4.2.1.11"/>
    </reaction>
    <physiologicalReaction direction="left-to-right" evidence="4">
        <dbReference type="Rhea" id="RHEA:10165"/>
    </physiologicalReaction>
    <physiologicalReaction direction="right-to-left" evidence="4">
        <dbReference type="Rhea" id="RHEA:10166"/>
    </physiologicalReaction>
</comment>
<comment type="cofactor">
    <cofactor evidence="3">
        <name>Mg(2+)</name>
        <dbReference type="ChEBI" id="CHEBI:18420"/>
    </cofactor>
    <text evidence="3 4">Binds 2 Mg(2+) ions per subunit (By similarity). Mg(2+) is required for catalysis and for stabilizing the dimer (By similarity). Unlike for mammalian and yeast enolases, Mg(2+) is dispensable to form an active closed conformation (By similarity). Inhibited by high levels of Mg(2+) (By similarity).</text>
</comment>
<comment type="pathway">
    <text evidence="3">Carbohydrate degradation; glycolysis; pyruvate from D-glyceraldehyde 3-phosphate: step 4/5.</text>
</comment>
<comment type="subunit">
    <text evidence="3 4">Homodimer (By similarity). Forms a complex at least composed of DegP, ENO and HSP70 (By similarity). Interacts with G-actin (By similarity). Interacts (via the DKSLVK motif) with mammalian host PLG/plasminogen (present in the mosquito blood meal); the interaction occurs at the ookinete cell surface and is required for ookinete invasion of the mosquito midgut (By similarity). Interacts with A.gambiae EBP; depending on the Plasmodium species, the interaction is either involved in ookinete invasion of the mosquito midgut (P.berghei) or is dispensable (P.falciparum) (By similarity).</text>
</comment>
<comment type="subcellular location">
    <subcellularLocation>
        <location evidence="3">Cytoplasm</location>
    </subcellularLocation>
    <subcellularLocation>
        <location evidence="3">Nucleus</location>
    </subcellularLocation>
    <subcellularLocation>
        <location evidence="4">Cytoplasm</location>
        <location evidence="4">Cytoskeleton</location>
    </subcellularLocation>
    <subcellularLocation>
        <location evidence="3">Cell surface</location>
    </subcellularLocation>
    <subcellularLocation>
        <location evidence="2">Cell membrane</location>
        <topology evidence="6">Peripheral membrane protein</topology>
        <orientation evidence="2">Cytoplasmic side</orientation>
    </subcellularLocation>
    <subcellularLocation>
        <location evidence="3">Vacuole</location>
    </subcellularLocation>
    <text evidence="2 3 4">Partially localizes to the nucleus in rings and trophozoites. Localization to the nucleus and food vacuole is higher in early and mid-stage trophozoites compared to the late-stage trophozoites and schizonts (By similarity). In the nucleus, localizes to heterochromatin region (By similarity). In rings, nuclear localization is dependent on the actin cytoskeleton (By similarity). Localizes to the cell surface of merozoites (By similarity). In gametocytes, predominantly localizes to the actin cytoskeleton (By similarity). In the trophozoite food vacuole, colocalizes with hemozoin, a product of heme detoxification (By similarity). In sporozoites, localizes to punctate structures beneath the cell membrane (By similarity). Localizes to the cell surface of ookinetes, especially on the apical pellicle complex that is involved in invasion (By similarity). When phosphorylated at Thr-339, localizes to the cytoskeleton (By similarity). When phosphorylated at Ser-42, localizes to the cytoplasm (By similarity). When ubiquitinated at Lys-138, acetylated at Lys-133 and Lys-375 and phosphorylated at Tyr-139, localizes to the food vacuole (By similarity). When triubiquitinated at Lys-138, appears to colocalize with hemozoin in the food vacuole (By similarity).</text>
</comment>
<comment type="domain">
    <text evidence="3">The pentapeptide insert motif is required for the stabilization of the apo-enzyme in an active closed conformation, independently of Mg(2+) binding. The motif is also required for homodimerization. This motif is only present in Apicomplexa and plant enolases.</text>
</comment>
<comment type="domain">
    <text evidence="4">The DKSLVK motif binds to the lysine-binding Kringle domains of plasminogen from various mammalian species. This motif is present only in enolases of plant and several microbial pathogens including Plasmodium species.</text>
</comment>
<comment type="similarity">
    <text evidence="6">Belongs to the enolase family.</text>
</comment>